<reference evidence="5" key="1">
    <citation type="submission" date="2008-06" db="EMBL/GenBank/DDBJ databases">
        <authorList>
            <consortium name="NIH - Xenopus Gene Collection (XGC) project"/>
        </authorList>
    </citation>
    <scope>NUCLEOTIDE SEQUENCE [LARGE SCALE MRNA]</scope>
    <source>
        <tissue evidence="5">Tadpole</tissue>
    </source>
</reference>
<keyword id="KW-0175">Coiled coil</keyword>
<keyword id="KW-0221">Differentiation</keyword>
<keyword id="KW-0238">DNA-binding</keyword>
<keyword id="KW-0539">Nucleus</keyword>
<keyword id="KW-1185">Reference proteome</keyword>
<keyword id="KW-0804">Transcription</keyword>
<keyword id="KW-0805">Transcription regulation</keyword>
<comment type="function">
    <text evidence="1">Transcription factor involved in chondrocytes differentiation and cartilage formation. Specifically binds the 5'-AACAAT-3' DNA motif present in enhancers and super-enhancers and promotes expression of genes important for chondrogenesis. Required for overt chondrogenesis when condensed prechondrocytes differentiate into early stage chondrocytes: sox5 and sox6 cooperatively bind with sox9 on active enhancers and super-enhancers associated with cartilage-specific genes, and thereby potentiate sox9's ability to transactivate. Not involved in precartilaginous condensation, the first step in chondrogenesis, during which skeletal progenitors differentiate into prechondrocytes.</text>
</comment>
<comment type="subcellular location">
    <subcellularLocation>
        <location evidence="1">Nucleus</location>
    </subcellularLocation>
</comment>
<sequence length="753" mass="83100">MLTDPDLPPEFERMSSKRPASPYGEADGEVAMVTSRQKMEDDGGDGLPAFHLPLHVGFKPHSEEFQAVSLLTQEGCDRRSPSYQHNTMELDCNKMPPFALHNAATSPIKAEELGRQSGESLANAMLGTPERRKGSLADVVDTLKQRKMEELIKSEPEETPSIEKLLSKDWKDKLLAMGSGNLGDVKGTPESLAEKERQLMAMINQLTSLREQLLAAHDEQKKLAASQIEKQRQQMELAKQQQEQIARQQQQLLQQQHKINLLQQQIQVQGQLPPLMIPVFPPDQRTLAAAAAAQQGFLIPPGFSYKPGCSDPYPVQLIPTTMAAAAAATPGLAPLQLQQLYAAQLAAMQVSPGAKLPGVPPSNLSNAVSPSSIHTDKSTSSPPPKTKDDVTQPLNLSAKPKGSDSKSPSSPTSPHIPRLSSALAHKPICSTSASTPLRVNSIDILSSITSPGYLNDHDAVTKAIQEARQMKEQLRREQQALDGKVVNSLGLNNCRTDKDKSSLESLTQQLTGKPNEDKFSHAMMDFNLSGDSDGSAGISESRIYRESRGRGSNEPHIKRPMNAFMVWAKDERRKILQAFPDMHNSNISKILGSRWKAMTNLEKQPYYEEQARLSKQHLEKYPDYKYKPRPKRTCLVDGKKLRIGEYKAIMRSRRQQAQIPISTAGVVYPGAIAMAGMPSPHLPSEHSSVSSSPEPGMPVIQSTYGIKEEEPHIKEEIHREDINGEMYDEYDEDDDPDVDYASDSENLSAEQAN</sequence>
<proteinExistence type="evidence at transcript level"/>
<evidence type="ECO:0000250" key="1">
    <source>
        <dbReference type="UniProtKB" id="P35710"/>
    </source>
</evidence>
<evidence type="ECO:0000255" key="2"/>
<evidence type="ECO:0000255" key="3">
    <source>
        <dbReference type="PROSITE-ProRule" id="PRU00267"/>
    </source>
</evidence>
<evidence type="ECO:0000256" key="4">
    <source>
        <dbReference type="SAM" id="MobiDB-lite"/>
    </source>
</evidence>
<evidence type="ECO:0000312" key="5">
    <source>
        <dbReference type="EMBL" id="AAI67694.1"/>
    </source>
</evidence>
<gene>
    <name evidence="5" type="primary">sox5</name>
</gene>
<dbReference type="EMBL" id="BC167694">
    <property type="protein sequence ID" value="AAI67694.1"/>
    <property type="molecule type" value="mRNA"/>
</dbReference>
<dbReference type="RefSeq" id="NP_001122130.1">
    <property type="nucleotide sequence ID" value="NM_001128658.1"/>
</dbReference>
<dbReference type="BMRB" id="B3DM43"/>
<dbReference type="SMR" id="B3DM43"/>
<dbReference type="FunCoup" id="B3DM43">
    <property type="interactions" value="1738"/>
</dbReference>
<dbReference type="STRING" id="8364.ENSXETP00000004473"/>
<dbReference type="PaxDb" id="8364-ENSXETP00000055793"/>
<dbReference type="GeneID" id="100038209"/>
<dbReference type="KEGG" id="xtr:100038209"/>
<dbReference type="AGR" id="Xenbase:XB-GENE-487032"/>
<dbReference type="CTD" id="6660"/>
<dbReference type="Xenbase" id="XB-GENE-487032">
    <property type="gene designation" value="sox5"/>
</dbReference>
<dbReference type="eggNOG" id="KOG0528">
    <property type="taxonomic scope" value="Eukaryota"/>
</dbReference>
<dbReference type="InParanoid" id="B3DM43"/>
<dbReference type="OrthoDB" id="6247875at2759"/>
<dbReference type="Proteomes" id="UP000008143">
    <property type="component" value="Chromosome 3"/>
</dbReference>
<dbReference type="GO" id="GO:0005634">
    <property type="term" value="C:nucleus"/>
    <property type="evidence" value="ECO:0007669"/>
    <property type="project" value="UniProtKB-SubCell"/>
</dbReference>
<dbReference type="GO" id="GO:0003677">
    <property type="term" value="F:DNA binding"/>
    <property type="evidence" value="ECO:0007669"/>
    <property type="project" value="UniProtKB-KW"/>
</dbReference>
<dbReference type="GO" id="GO:0001502">
    <property type="term" value="P:cartilage condensation"/>
    <property type="evidence" value="ECO:0000250"/>
    <property type="project" value="UniProtKB"/>
</dbReference>
<dbReference type="GO" id="GO:0051216">
    <property type="term" value="P:cartilage development"/>
    <property type="evidence" value="ECO:0000250"/>
    <property type="project" value="UniProtKB"/>
</dbReference>
<dbReference type="GO" id="GO:0002062">
    <property type="term" value="P:chondrocyte differentiation"/>
    <property type="evidence" value="ECO:0000250"/>
    <property type="project" value="UniProtKB"/>
</dbReference>
<dbReference type="CDD" id="cd22042">
    <property type="entry name" value="HMG-box_EGL13-like"/>
    <property type="match status" value="1"/>
</dbReference>
<dbReference type="FunFam" id="1.10.30.10:FF:000003">
    <property type="entry name" value="Putative transcription factor SOX-6"/>
    <property type="match status" value="1"/>
</dbReference>
<dbReference type="Gene3D" id="1.10.30.10">
    <property type="entry name" value="High mobility group box domain"/>
    <property type="match status" value="1"/>
</dbReference>
<dbReference type="InterPro" id="IPR009071">
    <property type="entry name" value="HMG_box_dom"/>
</dbReference>
<dbReference type="InterPro" id="IPR036910">
    <property type="entry name" value="HMG_box_dom_sf"/>
</dbReference>
<dbReference type="InterPro" id="IPR051356">
    <property type="entry name" value="SOX/SOX-like_TF"/>
</dbReference>
<dbReference type="PANTHER" id="PTHR45789">
    <property type="entry name" value="FI18025P1"/>
    <property type="match status" value="1"/>
</dbReference>
<dbReference type="PANTHER" id="PTHR45789:SF3">
    <property type="entry name" value="TRANSCRIPTION FACTOR SOX-5"/>
    <property type="match status" value="1"/>
</dbReference>
<dbReference type="Pfam" id="PF00505">
    <property type="entry name" value="HMG_box"/>
    <property type="match status" value="1"/>
</dbReference>
<dbReference type="SMART" id="SM00398">
    <property type="entry name" value="HMG"/>
    <property type="match status" value="1"/>
</dbReference>
<dbReference type="SUPFAM" id="SSF47095">
    <property type="entry name" value="HMG-box"/>
    <property type="match status" value="1"/>
</dbReference>
<dbReference type="PROSITE" id="PS50118">
    <property type="entry name" value="HMG_BOX_2"/>
    <property type="match status" value="1"/>
</dbReference>
<name>SOX5_XENTR</name>
<accession>B3DM43</accession>
<feature type="chain" id="PRO_0000378066" description="Transcription factor Sox-5">
    <location>
        <begin position="1"/>
        <end position="753"/>
    </location>
</feature>
<feature type="DNA-binding region" description="HMG box" evidence="3">
    <location>
        <begin position="557"/>
        <end position="625"/>
    </location>
</feature>
<feature type="region of interest" description="Disordered" evidence="4">
    <location>
        <begin position="1"/>
        <end position="27"/>
    </location>
</feature>
<feature type="region of interest" description="Disordered" evidence="4">
    <location>
        <begin position="357"/>
        <end position="418"/>
    </location>
</feature>
<feature type="region of interest" description="Disordered" evidence="4">
    <location>
        <begin position="679"/>
        <end position="753"/>
    </location>
</feature>
<feature type="coiled-coil region" evidence="2">
    <location>
        <begin position="453"/>
        <end position="487"/>
    </location>
</feature>
<feature type="compositionally biased region" description="Polar residues" evidence="4">
    <location>
        <begin position="362"/>
        <end position="373"/>
    </location>
</feature>
<feature type="compositionally biased region" description="Low complexity" evidence="4">
    <location>
        <begin position="397"/>
        <end position="413"/>
    </location>
</feature>
<feature type="compositionally biased region" description="Low complexity" evidence="4">
    <location>
        <begin position="685"/>
        <end position="699"/>
    </location>
</feature>
<feature type="compositionally biased region" description="Basic and acidic residues" evidence="4">
    <location>
        <begin position="706"/>
        <end position="722"/>
    </location>
</feature>
<feature type="compositionally biased region" description="Acidic residues" evidence="4">
    <location>
        <begin position="726"/>
        <end position="742"/>
    </location>
</feature>
<organism>
    <name type="scientific">Xenopus tropicalis</name>
    <name type="common">Western clawed frog</name>
    <name type="synonym">Silurana tropicalis</name>
    <dbReference type="NCBI Taxonomy" id="8364"/>
    <lineage>
        <taxon>Eukaryota</taxon>
        <taxon>Metazoa</taxon>
        <taxon>Chordata</taxon>
        <taxon>Craniata</taxon>
        <taxon>Vertebrata</taxon>
        <taxon>Euteleostomi</taxon>
        <taxon>Amphibia</taxon>
        <taxon>Batrachia</taxon>
        <taxon>Anura</taxon>
        <taxon>Pipoidea</taxon>
        <taxon>Pipidae</taxon>
        <taxon>Xenopodinae</taxon>
        <taxon>Xenopus</taxon>
        <taxon>Silurana</taxon>
    </lineage>
</organism>
<protein>
    <recommendedName>
        <fullName evidence="1">Transcription factor Sox-5</fullName>
    </recommendedName>
    <alternativeName>
        <fullName>SRY (sex determining region Y)-box 5</fullName>
    </alternativeName>
</protein>